<gene>
    <name evidence="1" type="primary">purA</name>
    <name type="ordered locus">SUN_0174</name>
</gene>
<protein>
    <recommendedName>
        <fullName evidence="1">Adenylosuccinate synthetase</fullName>
        <shortName evidence="1">AMPSase</shortName>
        <shortName evidence="1">AdSS</shortName>
        <ecNumber evidence="1">6.3.4.4</ecNumber>
    </recommendedName>
    <alternativeName>
        <fullName evidence="1">IMP--aspartate ligase</fullName>
    </alternativeName>
</protein>
<proteinExistence type="inferred from homology"/>
<reference key="1">
    <citation type="journal article" date="2007" name="Proc. Natl. Acad. Sci. U.S.A.">
        <title>Deep-sea vent epsilon-proteobacterial genomes provide insights into emergence of pathogens.</title>
        <authorList>
            <person name="Nakagawa S."/>
            <person name="Takaki Y."/>
            <person name="Shimamura S."/>
            <person name="Reysenbach A.-L."/>
            <person name="Takai K."/>
            <person name="Horikoshi K."/>
        </authorList>
    </citation>
    <scope>NUCLEOTIDE SEQUENCE [LARGE SCALE GENOMIC DNA]</scope>
    <source>
        <strain>NBC37-1</strain>
    </source>
</reference>
<accession>A6Q6M5</accession>
<evidence type="ECO:0000255" key="1">
    <source>
        <dbReference type="HAMAP-Rule" id="MF_00011"/>
    </source>
</evidence>
<comment type="function">
    <text evidence="1">Plays an important role in the de novo pathway of purine nucleotide biosynthesis. Catalyzes the first committed step in the biosynthesis of AMP from IMP.</text>
</comment>
<comment type="catalytic activity">
    <reaction evidence="1">
        <text>IMP + L-aspartate + GTP = N(6)-(1,2-dicarboxyethyl)-AMP + GDP + phosphate + 2 H(+)</text>
        <dbReference type="Rhea" id="RHEA:15753"/>
        <dbReference type="ChEBI" id="CHEBI:15378"/>
        <dbReference type="ChEBI" id="CHEBI:29991"/>
        <dbReference type="ChEBI" id="CHEBI:37565"/>
        <dbReference type="ChEBI" id="CHEBI:43474"/>
        <dbReference type="ChEBI" id="CHEBI:57567"/>
        <dbReference type="ChEBI" id="CHEBI:58053"/>
        <dbReference type="ChEBI" id="CHEBI:58189"/>
        <dbReference type="EC" id="6.3.4.4"/>
    </reaction>
</comment>
<comment type="cofactor">
    <cofactor evidence="1">
        <name>Mg(2+)</name>
        <dbReference type="ChEBI" id="CHEBI:18420"/>
    </cofactor>
    <text evidence="1">Binds 1 Mg(2+) ion per subunit.</text>
</comment>
<comment type="pathway">
    <text evidence="1">Purine metabolism; AMP biosynthesis via de novo pathway; AMP from IMP: step 1/2.</text>
</comment>
<comment type="subunit">
    <text evidence="1">Homodimer.</text>
</comment>
<comment type="subcellular location">
    <subcellularLocation>
        <location evidence="1">Cytoplasm</location>
    </subcellularLocation>
</comment>
<comment type="similarity">
    <text evidence="1">Belongs to the adenylosuccinate synthetase family.</text>
</comment>
<name>PURA_SULNB</name>
<feature type="chain" id="PRO_1000000933" description="Adenylosuccinate synthetase">
    <location>
        <begin position="1"/>
        <end position="416"/>
    </location>
</feature>
<feature type="active site" description="Proton acceptor" evidence="1">
    <location>
        <position position="14"/>
    </location>
</feature>
<feature type="active site" description="Proton donor" evidence="1">
    <location>
        <position position="42"/>
    </location>
</feature>
<feature type="binding site" evidence="1">
    <location>
        <begin position="13"/>
        <end position="19"/>
    </location>
    <ligand>
        <name>GTP</name>
        <dbReference type="ChEBI" id="CHEBI:37565"/>
    </ligand>
</feature>
<feature type="binding site" description="in other chain" evidence="1">
    <location>
        <begin position="14"/>
        <end position="17"/>
    </location>
    <ligand>
        <name>IMP</name>
        <dbReference type="ChEBI" id="CHEBI:58053"/>
        <note>ligand shared between dimeric partners</note>
    </ligand>
</feature>
<feature type="binding site" evidence="1">
    <location>
        <position position="14"/>
    </location>
    <ligand>
        <name>Mg(2+)</name>
        <dbReference type="ChEBI" id="CHEBI:18420"/>
    </ligand>
</feature>
<feature type="binding site" description="in other chain" evidence="1">
    <location>
        <begin position="39"/>
        <end position="42"/>
    </location>
    <ligand>
        <name>IMP</name>
        <dbReference type="ChEBI" id="CHEBI:58053"/>
        <note>ligand shared between dimeric partners</note>
    </ligand>
</feature>
<feature type="binding site" evidence="1">
    <location>
        <begin position="41"/>
        <end position="43"/>
    </location>
    <ligand>
        <name>GTP</name>
        <dbReference type="ChEBI" id="CHEBI:37565"/>
    </ligand>
</feature>
<feature type="binding site" evidence="1">
    <location>
        <position position="41"/>
    </location>
    <ligand>
        <name>Mg(2+)</name>
        <dbReference type="ChEBI" id="CHEBI:18420"/>
    </ligand>
</feature>
<feature type="binding site" description="in other chain" evidence="1">
    <location>
        <position position="126"/>
    </location>
    <ligand>
        <name>IMP</name>
        <dbReference type="ChEBI" id="CHEBI:58053"/>
        <note>ligand shared between dimeric partners</note>
    </ligand>
</feature>
<feature type="binding site" evidence="1">
    <location>
        <position position="140"/>
    </location>
    <ligand>
        <name>IMP</name>
        <dbReference type="ChEBI" id="CHEBI:58053"/>
        <note>ligand shared between dimeric partners</note>
    </ligand>
</feature>
<feature type="binding site" description="in other chain" evidence="1">
    <location>
        <position position="220"/>
    </location>
    <ligand>
        <name>IMP</name>
        <dbReference type="ChEBI" id="CHEBI:58053"/>
        <note>ligand shared between dimeric partners</note>
    </ligand>
</feature>
<feature type="binding site" description="in other chain" evidence="1">
    <location>
        <position position="235"/>
    </location>
    <ligand>
        <name>IMP</name>
        <dbReference type="ChEBI" id="CHEBI:58053"/>
        <note>ligand shared between dimeric partners</note>
    </ligand>
</feature>
<feature type="binding site" evidence="1">
    <location>
        <begin position="295"/>
        <end position="301"/>
    </location>
    <ligand>
        <name>substrate</name>
    </ligand>
</feature>
<feature type="binding site" description="in other chain" evidence="1">
    <location>
        <position position="299"/>
    </location>
    <ligand>
        <name>IMP</name>
        <dbReference type="ChEBI" id="CHEBI:58053"/>
        <note>ligand shared between dimeric partners</note>
    </ligand>
</feature>
<feature type="binding site" evidence="1">
    <location>
        <position position="301"/>
    </location>
    <ligand>
        <name>GTP</name>
        <dbReference type="ChEBI" id="CHEBI:37565"/>
    </ligand>
</feature>
<feature type="binding site" evidence="1">
    <location>
        <begin position="327"/>
        <end position="329"/>
    </location>
    <ligand>
        <name>GTP</name>
        <dbReference type="ChEBI" id="CHEBI:37565"/>
    </ligand>
</feature>
<feature type="binding site" evidence="1">
    <location>
        <begin position="405"/>
        <end position="407"/>
    </location>
    <ligand>
        <name>GTP</name>
        <dbReference type="ChEBI" id="CHEBI:37565"/>
    </ligand>
</feature>
<dbReference type="EC" id="6.3.4.4" evidence="1"/>
<dbReference type="EMBL" id="AP009179">
    <property type="protein sequence ID" value="BAF71134.1"/>
    <property type="molecule type" value="Genomic_DNA"/>
</dbReference>
<dbReference type="RefSeq" id="WP_011979867.1">
    <property type="nucleotide sequence ID" value="NC_009663.1"/>
</dbReference>
<dbReference type="SMR" id="A6Q6M5"/>
<dbReference type="STRING" id="387093.SUN_0174"/>
<dbReference type="KEGG" id="sun:SUN_0174"/>
<dbReference type="eggNOG" id="COG0104">
    <property type="taxonomic scope" value="Bacteria"/>
</dbReference>
<dbReference type="HOGENOM" id="CLU_029848_0_0_7"/>
<dbReference type="OrthoDB" id="9807553at2"/>
<dbReference type="UniPathway" id="UPA00075">
    <property type="reaction ID" value="UER00335"/>
</dbReference>
<dbReference type="Proteomes" id="UP000006378">
    <property type="component" value="Chromosome"/>
</dbReference>
<dbReference type="GO" id="GO:0005737">
    <property type="term" value="C:cytoplasm"/>
    <property type="evidence" value="ECO:0007669"/>
    <property type="project" value="UniProtKB-SubCell"/>
</dbReference>
<dbReference type="GO" id="GO:0004019">
    <property type="term" value="F:adenylosuccinate synthase activity"/>
    <property type="evidence" value="ECO:0007669"/>
    <property type="project" value="UniProtKB-UniRule"/>
</dbReference>
<dbReference type="GO" id="GO:0005525">
    <property type="term" value="F:GTP binding"/>
    <property type="evidence" value="ECO:0007669"/>
    <property type="project" value="UniProtKB-UniRule"/>
</dbReference>
<dbReference type="GO" id="GO:0000287">
    <property type="term" value="F:magnesium ion binding"/>
    <property type="evidence" value="ECO:0007669"/>
    <property type="project" value="UniProtKB-UniRule"/>
</dbReference>
<dbReference type="GO" id="GO:0044208">
    <property type="term" value="P:'de novo' AMP biosynthetic process"/>
    <property type="evidence" value="ECO:0007669"/>
    <property type="project" value="UniProtKB-UniRule"/>
</dbReference>
<dbReference type="GO" id="GO:0046040">
    <property type="term" value="P:IMP metabolic process"/>
    <property type="evidence" value="ECO:0007669"/>
    <property type="project" value="TreeGrafter"/>
</dbReference>
<dbReference type="CDD" id="cd03108">
    <property type="entry name" value="AdSS"/>
    <property type="match status" value="1"/>
</dbReference>
<dbReference type="FunFam" id="1.10.300.10:FF:000001">
    <property type="entry name" value="Adenylosuccinate synthetase"/>
    <property type="match status" value="1"/>
</dbReference>
<dbReference type="FunFam" id="3.90.170.10:FF:000001">
    <property type="entry name" value="Adenylosuccinate synthetase"/>
    <property type="match status" value="1"/>
</dbReference>
<dbReference type="Gene3D" id="3.40.440.10">
    <property type="entry name" value="Adenylosuccinate Synthetase, subunit A, domain 1"/>
    <property type="match status" value="1"/>
</dbReference>
<dbReference type="Gene3D" id="1.10.300.10">
    <property type="entry name" value="Adenylosuccinate Synthetase, subunit A, domain 2"/>
    <property type="match status" value="1"/>
</dbReference>
<dbReference type="Gene3D" id="3.90.170.10">
    <property type="entry name" value="Adenylosuccinate Synthetase, subunit A, domain 3"/>
    <property type="match status" value="1"/>
</dbReference>
<dbReference type="HAMAP" id="MF_00011">
    <property type="entry name" value="Adenylosucc_synth"/>
    <property type="match status" value="1"/>
</dbReference>
<dbReference type="InterPro" id="IPR018220">
    <property type="entry name" value="Adenylosuccin_syn_GTP-bd"/>
</dbReference>
<dbReference type="InterPro" id="IPR033128">
    <property type="entry name" value="Adenylosuccin_syn_Lys_AS"/>
</dbReference>
<dbReference type="InterPro" id="IPR042109">
    <property type="entry name" value="Adenylosuccinate_synth_dom1"/>
</dbReference>
<dbReference type="InterPro" id="IPR042110">
    <property type="entry name" value="Adenylosuccinate_synth_dom2"/>
</dbReference>
<dbReference type="InterPro" id="IPR042111">
    <property type="entry name" value="Adenylosuccinate_synth_dom3"/>
</dbReference>
<dbReference type="InterPro" id="IPR001114">
    <property type="entry name" value="Adenylosuccinate_synthetase"/>
</dbReference>
<dbReference type="InterPro" id="IPR027417">
    <property type="entry name" value="P-loop_NTPase"/>
</dbReference>
<dbReference type="NCBIfam" id="NF002223">
    <property type="entry name" value="PRK01117.1"/>
    <property type="match status" value="1"/>
</dbReference>
<dbReference type="NCBIfam" id="TIGR00184">
    <property type="entry name" value="purA"/>
    <property type="match status" value="1"/>
</dbReference>
<dbReference type="PANTHER" id="PTHR11846">
    <property type="entry name" value="ADENYLOSUCCINATE SYNTHETASE"/>
    <property type="match status" value="1"/>
</dbReference>
<dbReference type="PANTHER" id="PTHR11846:SF0">
    <property type="entry name" value="ADENYLOSUCCINATE SYNTHETASE"/>
    <property type="match status" value="1"/>
</dbReference>
<dbReference type="Pfam" id="PF00709">
    <property type="entry name" value="Adenylsucc_synt"/>
    <property type="match status" value="1"/>
</dbReference>
<dbReference type="SMART" id="SM00788">
    <property type="entry name" value="Adenylsucc_synt"/>
    <property type="match status" value="1"/>
</dbReference>
<dbReference type="SUPFAM" id="SSF52540">
    <property type="entry name" value="P-loop containing nucleoside triphosphate hydrolases"/>
    <property type="match status" value="1"/>
</dbReference>
<dbReference type="PROSITE" id="PS01266">
    <property type="entry name" value="ADENYLOSUCCIN_SYN_1"/>
    <property type="match status" value="1"/>
</dbReference>
<dbReference type="PROSITE" id="PS00513">
    <property type="entry name" value="ADENYLOSUCCIN_SYN_2"/>
    <property type="match status" value="1"/>
</dbReference>
<keyword id="KW-0963">Cytoplasm</keyword>
<keyword id="KW-0342">GTP-binding</keyword>
<keyword id="KW-0436">Ligase</keyword>
<keyword id="KW-0460">Magnesium</keyword>
<keyword id="KW-0479">Metal-binding</keyword>
<keyword id="KW-0547">Nucleotide-binding</keyword>
<keyword id="KW-0658">Purine biosynthesis</keyword>
<organism>
    <name type="scientific">Sulfurovum sp. (strain NBC37-1)</name>
    <dbReference type="NCBI Taxonomy" id="387093"/>
    <lineage>
        <taxon>Bacteria</taxon>
        <taxon>Pseudomonadati</taxon>
        <taxon>Campylobacterota</taxon>
        <taxon>Epsilonproteobacteria</taxon>
        <taxon>Campylobacterales</taxon>
        <taxon>Sulfurovaceae</taxon>
        <taxon>Sulfurovum</taxon>
    </lineage>
</organism>
<sequence length="416" mass="45825">MSKADLIVGLQWGDEGKGKIVDHMAQTHDYVCRFAGGHNAGHTIVIGDKTYALHLIPSGVLNPKAKNVVGNGVVLSPKDFIKEMEQFDNLEGRLFLSDKAHILLPYHADIDQARERMKGDKAIGTTGKGIGPAYGDKVARVGHRLGELLHPEKLASKIIAFFEMNKPVFDAMGVEMPETVALLEELEGYRKVLAPYICDTTQLMWKIIDEDKRILLEGAQGTMLDIDHGTYPYVTSSTTVSAGACSGLGLNPKDIGKVTGIAKAYCTRVGNGPFPSEDMGKEGDRLRENGHEFGTTTGRPRRCGWFDAVAMRHAVRVNGVDQVALMKLDVLDGFDEIKVCVAYEFEGKEIDYVPYDLEDVKPIYKSFPGWEKTEGAREFDALPETAKSYILALEEMIGTKMGIISTSPEREDTIIR</sequence>